<comment type="function">
    <text evidence="1">A chromatin protein, binds double-stranded DNA without sequence specificity. Constrains negative DNA supercoils.</text>
</comment>
<comment type="subunit">
    <text evidence="1">Monomer.</text>
</comment>
<comment type="subcellular location">
    <subcellularLocation>
        <location evidence="1">Chromosome</location>
    </subcellularLocation>
    <subcellularLocation>
        <location evidence="1">Cytoplasm</location>
    </subcellularLocation>
</comment>
<comment type="PTM">
    <text evidence="1">Methylated at multiple sites, to varying extents.</text>
</comment>
<comment type="similarity">
    <text evidence="1">Belongs to the Cren7 family.</text>
</comment>
<protein>
    <recommendedName>
        <fullName evidence="1">Chromatin protein Cren7</fullName>
    </recommendedName>
</protein>
<name>CREN7_SACI2</name>
<evidence type="ECO:0000255" key="1">
    <source>
        <dbReference type="HAMAP-Rule" id="MF_01387"/>
    </source>
</evidence>
<proteinExistence type="inferred from homology"/>
<feature type="chain" id="PRO_1000215132" description="Chromatin protein Cren7">
    <location>
        <begin position="1"/>
        <end position="60"/>
    </location>
</feature>
<dbReference type="EMBL" id="CP001399">
    <property type="protein sequence ID" value="ACP35343.1"/>
    <property type="molecule type" value="Genomic_DNA"/>
</dbReference>
<dbReference type="RefSeq" id="WP_012711256.1">
    <property type="nucleotide sequence ID" value="NC_012589.1"/>
</dbReference>
<dbReference type="BMRB" id="C3MPN0"/>
<dbReference type="SMR" id="C3MPN0"/>
<dbReference type="GeneID" id="84061563"/>
<dbReference type="KEGG" id="sis:LS215_1335"/>
<dbReference type="HOGENOM" id="CLU_2911298_0_0_2"/>
<dbReference type="OrthoDB" id="38142at2157"/>
<dbReference type="Proteomes" id="UP000001747">
    <property type="component" value="Chromosome"/>
</dbReference>
<dbReference type="GO" id="GO:0005694">
    <property type="term" value="C:chromosome"/>
    <property type="evidence" value="ECO:0007669"/>
    <property type="project" value="UniProtKB-SubCell"/>
</dbReference>
<dbReference type="GO" id="GO:0005737">
    <property type="term" value="C:cytoplasm"/>
    <property type="evidence" value="ECO:0007669"/>
    <property type="project" value="UniProtKB-SubCell"/>
</dbReference>
<dbReference type="GO" id="GO:0003690">
    <property type="term" value="F:double-stranded DNA binding"/>
    <property type="evidence" value="ECO:0007669"/>
    <property type="project" value="UniProtKB-UniRule"/>
</dbReference>
<dbReference type="Gene3D" id="2.30.30.610">
    <property type="entry name" value="Chromatin protein Cren7"/>
    <property type="match status" value="1"/>
</dbReference>
<dbReference type="HAMAP" id="MF_01387">
    <property type="entry name" value="Chromatin_Cren7"/>
    <property type="match status" value="1"/>
</dbReference>
<dbReference type="InterPro" id="IPR038647">
    <property type="entry name" value="Cren7_sf"/>
</dbReference>
<dbReference type="InterPro" id="IPR020906">
    <property type="entry name" value="dsDNA-bd_Cren7"/>
</dbReference>
<dbReference type="Pfam" id="PF11520">
    <property type="entry name" value="Cren7"/>
    <property type="match status" value="1"/>
</dbReference>
<gene>
    <name evidence="1" type="primary">creN7</name>
    <name type="ordered locus">LS215_1335</name>
</gene>
<keyword id="KW-0158">Chromosome</keyword>
<keyword id="KW-0963">Cytoplasm</keyword>
<keyword id="KW-0238">DNA-binding</keyword>
<keyword id="KW-0488">Methylation</keyword>
<organism>
    <name type="scientific">Saccharolobus islandicus (strain L.S.2.15 / Lassen #1)</name>
    <name type="common">Sulfolobus islandicus</name>
    <dbReference type="NCBI Taxonomy" id="429572"/>
    <lineage>
        <taxon>Archaea</taxon>
        <taxon>Thermoproteota</taxon>
        <taxon>Thermoprotei</taxon>
        <taxon>Sulfolobales</taxon>
        <taxon>Sulfolobaceae</taxon>
        <taxon>Saccharolobus</taxon>
    </lineage>
</organism>
<reference key="1">
    <citation type="journal article" date="2009" name="Proc. Natl. Acad. Sci. U.S.A.">
        <title>Biogeography of the Sulfolobus islandicus pan-genome.</title>
        <authorList>
            <person name="Reno M.L."/>
            <person name="Held N.L."/>
            <person name="Fields C.J."/>
            <person name="Burke P.V."/>
            <person name="Whitaker R.J."/>
        </authorList>
    </citation>
    <scope>NUCLEOTIDE SEQUENCE [LARGE SCALE GENOMIC DNA]</scope>
    <source>
        <strain>L.S.2.15 / Lassen #1</strain>
    </source>
</reference>
<accession>C3MPN0</accession>
<sequence>MSSGKKAVKVKTPAGKEAELVPEKVWALAPKGRKGVKIGLFKDPETGKYFRHKLPDDYPI</sequence>